<protein>
    <recommendedName>
        <fullName evidence="1">UDP-N-acetylglucosamine--N-acetylmuramyl-(pentapeptide) pyrophosphoryl-undecaprenol N-acetylglucosamine transferase</fullName>
        <ecNumber evidence="1">2.4.1.227</ecNumber>
    </recommendedName>
    <alternativeName>
        <fullName evidence="1">Undecaprenyl-PP-MurNAc-pentapeptide-UDPGlcNAc GlcNAc transferase</fullName>
    </alternativeName>
</protein>
<gene>
    <name evidence="1" type="primary">murG</name>
    <name type="ordered locus">TPASS_0523</name>
</gene>
<proteinExistence type="inferred from homology"/>
<name>MURG_TREPS</name>
<reference key="1">
    <citation type="journal article" date="2008" name="BMC Microbiol.">
        <title>Complete genome sequence of Treponema pallidum ssp. pallidum strain SS14 determined with oligonucleotide arrays.</title>
        <authorList>
            <person name="Matejkova P."/>
            <person name="Strouhal M."/>
            <person name="Smajs D."/>
            <person name="Norris S.J."/>
            <person name="Palzkill T."/>
            <person name="Petrosino J.F."/>
            <person name="Sodergren E."/>
            <person name="Norton J.E."/>
            <person name="Singh J."/>
            <person name="Richmond T.A."/>
            <person name="Molla M.N."/>
            <person name="Albert T.J."/>
            <person name="Weinstock G.M."/>
        </authorList>
    </citation>
    <scope>NUCLEOTIDE SEQUENCE [LARGE SCALE GENOMIC DNA]</scope>
    <source>
        <strain>SS14</strain>
    </source>
</reference>
<evidence type="ECO:0000255" key="1">
    <source>
        <dbReference type="HAMAP-Rule" id="MF_00033"/>
    </source>
</evidence>
<organism>
    <name type="scientific">Treponema pallidum subsp. pallidum (strain SS14)</name>
    <dbReference type="NCBI Taxonomy" id="455434"/>
    <lineage>
        <taxon>Bacteria</taxon>
        <taxon>Pseudomonadati</taxon>
        <taxon>Spirochaetota</taxon>
        <taxon>Spirochaetia</taxon>
        <taxon>Spirochaetales</taxon>
        <taxon>Treponemataceae</taxon>
        <taxon>Treponema</taxon>
    </lineage>
</organism>
<keyword id="KW-0131">Cell cycle</keyword>
<keyword id="KW-0132">Cell division</keyword>
<keyword id="KW-0997">Cell inner membrane</keyword>
<keyword id="KW-1003">Cell membrane</keyword>
<keyword id="KW-0133">Cell shape</keyword>
<keyword id="KW-0961">Cell wall biogenesis/degradation</keyword>
<keyword id="KW-0328">Glycosyltransferase</keyword>
<keyword id="KW-0472">Membrane</keyword>
<keyword id="KW-0573">Peptidoglycan synthesis</keyword>
<keyword id="KW-0808">Transferase</keyword>
<comment type="function">
    <text evidence="1">Cell wall formation. Catalyzes the transfer of a GlcNAc subunit on undecaprenyl-pyrophosphoryl-MurNAc-pentapeptide (lipid intermediate I) to form undecaprenyl-pyrophosphoryl-MurNAc-(pentapeptide)GlcNAc (lipid intermediate II).</text>
</comment>
<comment type="catalytic activity">
    <reaction evidence="1">
        <text>di-trans,octa-cis-undecaprenyl diphospho-N-acetyl-alpha-D-muramoyl-L-alanyl-D-glutamyl-meso-2,6-diaminopimeloyl-D-alanyl-D-alanine + UDP-N-acetyl-alpha-D-glucosamine = di-trans,octa-cis-undecaprenyl diphospho-[N-acetyl-alpha-D-glucosaminyl-(1-&gt;4)]-N-acetyl-alpha-D-muramoyl-L-alanyl-D-glutamyl-meso-2,6-diaminopimeloyl-D-alanyl-D-alanine + UDP + H(+)</text>
        <dbReference type="Rhea" id="RHEA:31227"/>
        <dbReference type="ChEBI" id="CHEBI:15378"/>
        <dbReference type="ChEBI" id="CHEBI:57705"/>
        <dbReference type="ChEBI" id="CHEBI:58223"/>
        <dbReference type="ChEBI" id="CHEBI:61387"/>
        <dbReference type="ChEBI" id="CHEBI:61388"/>
        <dbReference type="EC" id="2.4.1.227"/>
    </reaction>
</comment>
<comment type="pathway">
    <text evidence="1">Cell wall biogenesis; peptidoglycan biosynthesis.</text>
</comment>
<comment type="subcellular location">
    <subcellularLocation>
        <location evidence="1">Cell inner membrane</location>
        <topology evidence="1">Peripheral membrane protein</topology>
        <orientation evidence="1">Cytoplasmic side</orientation>
    </subcellularLocation>
</comment>
<comment type="similarity">
    <text evidence="1">Belongs to the glycosyltransferase 28 family. MurG subfamily.</text>
</comment>
<dbReference type="EC" id="2.4.1.227" evidence="1"/>
<dbReference type="EMBL" id="CP000805">
    <property type="protein sequence ID" value="ACD70945.1"/>
    <property type="molecule type" value="Genomic_DNA"/>
</dbReference>
<dbReference type="RefSeq" id="WP_010881971.1">
    <property type="nucleotide sequence ID" value="NC_021508.1"/>
</dbReference>
<dbReference type="SMR" id="B2S3B6"/>
<dbReference type="CAZy" id="GT28">
    <property type="family name" value="Glycosyltransferase Family 28"/>
</dbReference>
<dbReference type="GeneID" id="93876292"/>
<dbReference type="KEGG" id="tpp:TPASS_0523"/>
<dbReference type="PATRIC" id="fig|455434.6.peg.521"/>
<dbReference type="UniPathway" id="UPA00219"/>
<dbReference type="Proteomes" id="UP000001202">
    <property type="component" value="Chromosome"/>
</dbReference>
<dbReference type="GO" id="GO:0005886">
    <property type="term" value="C:plasma membrane"/>
    <property type="evidence" value="ECO:0007669"/>
    <property type="project" value="UniProtKB-SubCell"/>
</dbReference>
<dbReference type="GO" id="GO:0051991">
    <property type="term" value="F:UDP-N-acetyl-D-glucosamine:N-acetylmuramoyl-L-alanyl-D-glutamyl-meso-2,6-diaminopimelyl-D-alanyl-D-alanine-diphosphoundecaprenol 4-beta-N-acetylglucosaminlytransferase activity"/>
    <property type="evidence" value="ECO:0007669"/>
    <property type="project" value="RHEA"/>
</dbReference>
<dbReference type="GO" id="GO:0050511">
    <property type="term" value="F:undecaprenyldiphospho-muramoylpentapeptide beta-N-acetylglucosaminyltransferase activity"/>
    <property type="evidence" value="ECO:0007669"/>
    <property type="project" value="UniProtKB-UniRule"/>
</dbReference>
<dbReference type="GO" id="GO:0005975">
    <property type="term" value="P:carbohydrate metabolic process"/>
    <property type="evidence" value="ECO:0007669"/>
    <property type="project" value="InterPro"/>
</dbReference>
<dbReference type="GO" id="GO:0051301">
    <property type="term" value="P:cell division"/>
    <property type="evidence" value="ECO:0007669"/>
    <property type="project" value="UniProtKB-KW"/>
</dbReference>
<dbReference type="GO" id="GO:0071555">
    <property type="term" value="P:cell wall organization"/>
    <property type="evidence" value="ECO:0007669"/>
    <property type="project" value="UniProtKB-KW"/>
</dbReference>
<dbReference type="GO" id="GO:0030259">
    <property type="term" value="P:lipid glycosylation"/>
    <property type="evidence" value="ECO:0007669"/>
    <property type="project" value="UniProtKB-UniRule"/>
</dbReference>
<dbReference type="GO" id="GO:0009252">
    <property type="term" value="P:peptidoglycan biosynthetic process"/>
    <property type="evidence" value="ECO:0007669"/>
    <property type="project" value="UniProtKB-UniRule"/>
</dbReference>
<dbReference type="GO" id="GO:0008360">
    <property type="term" value="P:regulation of cell shape"/>
    <property type="evidence" value="ECO:0007669"/>
    <property type="project" value="UniProtKB-KW"/>
</dbReference>
<dbReference type="CDD" id="cd03785">
    <property type="entry name" value="GT28_MurG"/>
    <property type="match status" value="1"/>
</dbReference>
<dbReference type="Gene3D" id="3.40.50.2000">
    <property type="entry name" value="Glycogen Phosphorylase B"/>
    <property type="match status" value="2"/>
</dbReference>
<dbReference type="HAMAP" id="MF_00033">
    <property type="entry name" value="MurG"/>
    <property type="match status" value="1"/>
</dbReference>
<dbReference type="InterPro" id="IPR006009">
    <property type="entry name" value="GlcNAc_MurG"/>
</dbReference>
<dbReference type="InterPro" id="IPR007235">
    <property type="entry name" value="Glyco_trans_28_C"/>
</dbReference>
<dbReference type="InterPro" id="IPR004276">
    <property type="entry name" value="GlycoTrans_28_N"/>
</dbReference>
<dbReference type="NCBIfam" id="TIGR01133">
    <property type="entry name" value="murG"/>
    <property type="match status" value="1"/>
</dbReference>
<dbReference type="PANTHER" id="PTHR21015:SF27">
    <property type="entry name" value="UDP-N-ACETYLGLUCOSAMINE--N-ACETYLMURAMYL-(PENTAPEPTIDE) PYROPHOSPHORYL-UNDECAPRENOL N-ACETYLGLUCOSAMINE TRANSFERASE"/>
    <property type="match status" value="1"/>
</dbReference>
<dbReference type="PANTHER" id="PTHR21015">
    <property type="entry name" value="UDP-N-ACETYLGLUCOSAMINE--N-ACETYLMURAMYL-(PENTAPEPTIDE) PYROPHOSPHORYL-UNDECAPRENOL N-ACETYLGLUCOSAMINE TRANSFERASE 1"/>
    <property type="match status" value="1"/>
</dbReference>
<dbReference type="Pfam" id="PF04101">
    <property type="entry name" value="Glyco_tran_28_C"/>
    <property type="match status" value="1"/>
</dbReference>
<dbReference type="Pfam" id="PF03033">
    <property type="entry name" value="Glyco_transf_28"/>
    <property type="match status" value="1"/>
</dbReference>
<dbReference type="SUPFAM" id="SSF53756">
    <property type="entry name" value="UDP-Glycosyltransferase/glycogen phosphorylase"/>
    <property type="match status" value="1"/>
</dbReference>
<feature type="chain" id="PRO_1000090484" description="UDP-N-acetylglucosamine--N-acetylmuramyl-(pentapeptide) pyrophosphoryl-undecaprenol N-acetylglucosamine transferase">
    <location>
        <begin position="1"/>
        <end position="384"/>
    </location>
</feature>
<feature type="binding site" evidence="1">
    <location>
        <begin position="22"/>
        <end position="24"/>
    </location>
    <ligand>
        <name>UDP-N-acetyl-alpha-D-glucosamine</name>
        <dbReference type="ChEBI" id="CHEBI:57705"/>
    </ligand>
</feature>
<feature type="binding site" evidence="1">
    <location>
        <position position="179"/>
    </location>
    <ligand>
        <name>UDP-N-acetyl-alpha-D-glucosamine</name>
        <dbReference type="ChEBI" id="CHEBI:57705"/>
    </ligand>
</feature>
<feature type="binding site" evidence="1">
    <location>
        <position position="209"/>
    </location>
    <ligand>
        <name>UDP-N-acetyl-alpha-D-glucosamine</name>
        <dbReference type="ChEBI" id="CHEBI:57705"/>
    </ligand>
</feature>
<feature type="binding site" evidence="1">
    <location>
        <position position="312"/>
    </location>
    <ligand>
        <name>UDP-N-acetyl-alpha-D-glucosamine</name>
        <dbReference type="ChEBI" id="CHEBI:57705"/>
    </ligand>
</feature>
<sequence length="384" mass="42049">MRFRARVSQSTAKCVVFTGGGTGGHIFPGIAVFQALAQQAAVRVVWIGAARGADRSIVESAGLEFCGITAGKWRRYASVRNFFDVFRVLVGTVQSYCILRALRPQALFSKGGFVSVPPCIAAWLLRIPVVTHESDISPGLATRINARFADRILVSYPHTSCYFPRARRAAVHCTGNPVRQDFFSAQAERAYQFLRIDQKKPLLTVLGGSSGARDLNARVLSCSTFLTERFYLVHQFGAGNEDQMHTITNSLSVNARHAYMSFPFIQAHLPDILAASALVLSRAGANAVWECAVLGKPMILFPLERGSSRGDQIENAEYFSAHGAACILRAQDEKGHQLVSLLTELFHPSCARIEEMARASYTLGIGNAAYDIAQQLQTFIKEGM</sequence>
<accession>B2S3B6</accession>